<accession>Q9S0Q7</accession>
<accession>D4ZE46</accession>
<reference key="1">
    <citation type="journal article" date="2000" name="FEMS Microbiol. Lett.">
        <title>Isolation and piezoresponse of the rpoA gene encoding the RNA polymerase alpha subunit from the deep-sea piezophilic bacterium Shewanella violacea.</title>
        <authorList>
            <person name="Nakasone K."/>
            <person name="Ikegami A."/>
            <person name="Fujii S."/>
            <person name="Kato C."/>
            <person name="Horikoshi K."/>
        </authorList>
    </citation>
    <scope>NUCLEOTIDE SEQUENCE [GENOMIC DNA]</scope>
</reference>
<reference key="2">
    <citation type="journal article" date="2010" name="Mol. Biosyst.">
        <title>Complete genome sequence and comparative analysis of Shewanella violacea, a psychrophilic and piezophilic bacterium from deep sea floor sediments.</title>
        <authorList>
            <person name="Aono E."/>
            <person name="Baba T."/>
            <person name="Ara T."/>
            <person name="Nishi T."/>
            <person name="Nakamichi T."/>
            <person name="Inamoto E."/>
            <person name="Toyonaga H."/>
            <person name="Hasegawa M."/>
            <person name="Takai Y."/>
            <person name="Okumura Y."/>
            <person name="Baba M."/>
            <person name="Tomita M."/>
            <person name="Kato C."/>
            <person name="Oshima T."/>
            <person name="Nakasone K."/>
            <person name="Mori H."/>
        </authorList>
    </citation>
    <scope>NUCLEOTIDE SEQUENCE [LARGE SCALE GENOMIC DNA]</scope>
    <source>
        <strain>JCM 10179 / CIP 106290 / LMG 19151 / DSS12</strain>
    </source>
</reference>
<protein>
    <recommendedName>
        <fullName evidence="1">Large ribosomal subunit protein bL17</fullName>
    </recommendedName>
    <alternativeName>
        <fullName evidence="2">50S ribosomal protein L17</fullName>
    </alternativeName>
</protein>
<name>RL17_SHEVD</name>
<dbReference type="EMBL" id="AB032408">
    <property type="protein sequence ID" value="BAA84526.1"/>
    <property type="molecule type" value="Genomic_DNA"/>
</dbReference>
<dbReference type="EMBL" id="AP011177">
    <property type="protein sequence ID" value="BAJ04107.1"/>
    <property type="molecule type" value="Genomic_DNA"/>
</dbReference>
<dbReference type="RefSeq" id="WP_005502465.1">
    <property type="nucleotide sequence ID" value="NC_014012.1"/>
</dbReference>
<dbReference type="SMR" id="Q9S0Q7"/>
<dbReference type="STRING" id="637905.SVI_4136"/>
<dbReference type="KEGG" id="svo:SVI_4136"/>
<dbReference type="eggNOG" id="COG0203">
    <property type="taxonomic scope" value="Bacteria"/>
</dbReference>
<dbReference type="HOGENOM" id="CLU_074407_2_2_6"/>
<dbReference type="OrthoDB" id="9809073at2"/>
<dbReference type="Proteomes" id="UP000002350">
    <property type="component" value="Chromosome"/>
</dbReference>
<dbReference type="GO" id="GO:0022625">
    <property type="term" value="C:cytosolic large ribosomal subunit"/>
    <property type="evidence" value="ECO:0007669"/>
    <property type="project" value="TreeGrafter"/>
</dbReference>
<dbReference type="GO" id="GO:0003735">
    <property type="term" value="F:structural constituent of ribosome"/>
    <property type="evidence" value="ECO:0007669"/>
    <property type="project" value="InterPro"/>
</dbReference>
<dbReference type="GO" id="GO:0006412">
    <property type="term" value="P:translation"/>
    <property type="evidence" value="ECO:0007669"/>
    <property type="project" value="UniProtKB-UniRule"/>
</dbReference>
<dbReference type="FunFam" id="3.90.1030.10:FF:000001">
    <property type="entry name" value="50S ribosomal protein L17"/>
    <property type="match status" value="1"/>
</dbReference>
<dbReference type="Gene3D" id="3.90.1030.10">
    <property type="entry name" value="Ribosomal protein L17"/>
    <property type="match status" value="1"/>
</dbReference>
<dbReference type="HAMAP" id="MF_01368">
    <property type="entry name" value="Ribosomal_bL17"/>
    <property type="match status" value="1"/>
</dbReference>
<dbReference type="InterPro" id="IPR000456">
    <property type="entry name" value="Ribosomal_bL17"/>
</dbReference>
<dbReference type="InterPro" id="IPR047859">
    <property type="entry name" value="Ribosomal_bL17_CS"/>
</dbReference>
<dbReference type="InterPro" id="IPR036373">
    <property type="entry name" value="Ribosomal_bL17_sf"/>
</dbReference>
<dbReference type="NCBIfam" id="TIGR00059">
    <property type="entry name" value="L17"/>
    <property type="match status" value="1"/>
</dbReference>
<dbReference type="PANTHER" id="PTHR14413:SF16">
    <property type="entry name" value="LARGE RIBOSOMAL SUBUNIT PROTEIN BL17M"/>
    <property type="match status" value="1"/>
</dbReference>
<dbReference type="PANTHER" id="PTHR14413">
    <property type="entry name" value="RIBOSOMAL PROTEIN L17"/>
    <property type="match status" value="1"/>
</dbReference>
<dbReference type="Pfam" id="PF01196">
    <property type="entry name" value="Ribosomal_L17"/>
    <property type="match status" value="1"/>
</dbReference>
<dbReference type="SUPFAM" id="SSF64263">
    <property type="entry name" value="Prokaryotic ribosomal protein L17"/>
    <property type="match status" value="1"/>
</dbReference>
<dbReference type="PROSITE" id="PS01167">
    <property type="entry name" value="RIBOSOMAL_L17"/>
    <property type="match status" value="1"/>
</dbReference>
<evidence type="ECO:0000255" key="1">
    <source>
        <dbReference type="HAMAP-Rule" id="MF_01368"/>
    </source>
</evidence>
<evidence type="ECO:0000305" key="2"/>
<sequence length="131" mass="14760">MRHRKSGRQLNRNSSHRQAMFRNMASSLVRHEVIKTTVAKAKELRRVVEPLITLAKSDSVANRRLAFARTRDAEVVGKLFNELGPRYQERPGGYTRILKCGLRTGDKAPMAYIELVGRPEAAEAVEADDAE</sequence>
<organism>
    <name type="scientific">Shewanella violacea (strain JCM 10179 / CIP 106290 / LMG 19151 / DSS12)</name>
    <dbReference type="NCBI Taxonomy" id="637905"/>
    <lineage>
        <taxon>Bacteria</taxon>
        <taxon>Pseudomonadati</taxon>
        <taxon>Pseudomonadota</taxon>
        <taxon>Gammaproteobacteria</taxon>
        <taxon>Alteromonadales</taxon>
        <taxon>Shewanellaceae</taxon>
        <taxon>Shewanella</taxon>
    </lineage>
</organism>
<gene>
    <name evidence="1" type="primary">rplQ</name>
    <name type="ordered locus">SVI_4136</name>
</gene>
<proteinExistence type="inferred from homology"/>
<feature type="chain" id="PRO_0000267944" description="Large ribosomal subunit protein bL17">
    <location>
        <begin position="1"/>
        <end position="131"/>
    </location>
</feature>
<comment type="subunit">
    <text evidence="1">Part of the 50S ribosomal subunit. Contacts protein L32.</text>
</comment>
<comment type="similarity">
    <text evidence="1">Belongs to the bacterial ribosomal protein bL17 family.</text>
</comment>
<keyword id="KW-1185">Reference proteome</keyword>
<keyword id="KW-0687">Ribonucleoprotein</keyword>
<keyword id="KW-0689">Ribosomal protein</keyword>